<organism>
    <name type="scientific">Danio rerio</name>
    <name type="common">Zebrafish</name>
    <name type="synonym">Brachydanio rerio</name>
    <dbReference type="NCBI Taxonomy" id="7955"/>
    <lineage>
        <taxon>Eukaryota</taxon>
        <taxon>Metazoa</taxon>
        <taxon>Chordata</taxon>
        <taxon>Craniata</taxon>
        <taxon>Vertebrata</taxon>
        <taxon>Euteleostomi</taxon>
        <taxon>Actinopterygii</taxon>
        <taxon>Neopterygii</taxon>
        <taxon>Teleostei</taxon>
        <taxon>Ostariophysi</taxon>
        <taxon>Cypriniformes</taxon>
        <taxon>Danionidae</taxon>
        <taxon>Danioninae</taxon>
        <taxon>Danio</taxon>
    </lineage>
</organism>
<dbReference type="EMBL" id="BX890616">
    <property type="protein sequence ID" value="CAI20694.1"/>
    <property type="molecule type" value="Genomic_DNA"/>
</dbReference>
<dbReference type="EMBL" id="BC044170">
    <property type="protein sequence ID" value="AAH44170.1"/>
    <property type="molecule type" value="mRNA"/>
</dbReference>
<dbReference type="EMBL" id="BC066710">
    <property type="protein sequence ID" value="AAH66710.1"/>
    <property type="status" value="ALT_INIT"/>
    <property type="molecule type" value="mRNA"/>
</dbReference>
<dbReference type="RefSeq" id="NP_997890.1">
    <property type="nucleotide sequence ID" value="NM_212725.1"/>
</dbReference>
<dbReference type="SMR" id="Q7ZYY4"/>
<dbReference type="FunCoup" id="Q7ZYY4">
    <property type="interactions" value="757"/>
</dbReference>
<dbReference type="STRING" id="7955.ENSDARP00000091640"/>
<dbReference type="PaxDb" id="7955-ENSDARP00000091640"/>
<dbReference type="Ensembl" id="ENSDART00000100867">
    <property type="protein sequence ID" value="ENSDARP00000091640"/>
    <property type="gene ID" value="ENSDARG00000056152"/>
</dbReference>
<dbReference type="GeneID" id="334205"/>
<dbReference type="KEGG" id="dre:334205"/>
<dbReference type="AGR" id="ZFIN:ZDB-GENE-030131-6137"/>
<dbReference type="CTD" id="10447"/>
<dbReference type="ZFIN" id="ZDB-GENE-030131-6137">
    <property type="gene designation" value="fam3c"/>
</dbReference>
<dbReference type="eggNOG" id="ENOG502QQR8">
    <property type="taxonomic scope" value="Eukaryota"/>
</dbReference>
<dbReference type="HOGENOM" id="CLU_099478_0_0_1"/>
<dbReference type="InParanoid" id="Q7ZYY4"/>
<dbReference type="OMA" id="KACPANH"/>
<dbReference type="OrthoDB" id="440755at2759"/>
<dbReference type="PhylomeDB" id="Q7ZYY4"/>
<dbReference type="TreeFam" id="TF353414"/>
<dbReference type="Reactome" id="R-DRE-114608">
    <property type="pathway name" value="Platelet degranulation"/>
</dbReference>
<dbReference type="PRO" id="PR:Q7ZYY4"/>
<dbReference type="Proteomes" id="UP000000437">
    <property type="component" value="Chromosome 4"/>
</dbReference>
<dbReference type="Bgee" id="ENSDARG00000056152">
    <property type="expression patterns" value="Expressed in early embryo and 30 other cell types or tissues"/>
</dbReference>
<dbReference type="ExpressionAtlas" id="Q7ZYY4">
    <property type="expression patterns" value="baseline and differential"/>
</dbReference>
<dbReference type="GO" id="GO:0005615">
    <property type="term" value="C:extracellular space"/>
    <property type="evidence" value="ECO:0000318"/>
    <property type="project" value="GO_Central"/>
</dbReference>
<dbReference type="GO" id="GO:0030246">
    <property type="term" value="F:carbohydrate binding"/>
    <property type="evidence" value="ECO:0007669"/>
    <property type="project" value="UniProtKB-KW"/>
</dbReference>
<dbReference type="CDD" id="cd13940">
    <property type="entry name" value="ILEI_FAM3C"/>
    <property type="match status" value="1"/>
</dbReference>
<dbReference type="InterPro" id="IPR039220">
    <property type="entry name" value="FAM3"/>
</dbReference>
<dbReference type="InterPro" id="IPR039477">
    <property type="entry name" value="ILEI/PANDER_dom"/>
</dbReference>
<dbReference type="InterPro" id="IPR039475">
    <property type="entry name" value="ILEI_FAM3C"/>
</dbReference>
<dbReference type="PANTHER" id="PTHR14592">
    <property type="entry name" value="UNCHARACTERIZED FAM3"/>
    <property type="match status" value="1"/>
</dbReference>
<dbReference type="Pfam" id="PF15711">
    <property type="entry name" value="ILEI"/>
    <property type="match status" value="1"/>
</dbReference>
<dbReference type="PROSITE" id="PS52031">
    <property type="entry name" value="GG_LECTIN"/>
    <property type="match status" value="1"/>
</dbReference>
<name>FAM3C_DANRE</name>
<evidence type="ECO:0000250" key="1"/>
<evidence type="ECO:0000255" key="2"/>
<evidence type="ECO:0000255" key="3">
    <source>
        <dbReference type="PROSITE-ProRule" id="PRU01375"/>
    </source>
</evidence>
<evidence type="ECO:0000305" key="4"/>
<comment type="function">
    <text evidence="1">Involved in retinal laminar formation.</text>
</comment>
<comment type="subcellular location">
    <subcellularLocation>
        <location evidence="1">Secreted</location>
    </subcellularLocation>
</comment>
<comment type="similarity">
    <text evidence="4">Belongs to the FAM3 family.</text>
</comment>
<comment type="sequence caution" evidence="4">
    <conflict type="erroneous initiation">
        <sequence resource="EMBL-CDS" id="AAH66710"/>
    </conflict>
    <text>Truncated N-terminus.</text>
</comment>
<feature type="signal peptide" evidence="2">
    <location>
        <begin position="1"/>
        <end position="30"/>
    </location>
</feature>
<feature type="chain" id="PRO_0000395983" description="Protein FAM3C">
    <location>
        <begin position="31"/>
        <end position="227"/>
    </location>
</feature>
<feature type="domain" description="GG-type lectin" evidence="3">
    <location>
        <begin position="67"/>
        <end position="225"/>
    </location>
</feature>
<feature type="disulfide bond" evidence="1">
    <location>
        <begin position="58"/>
        <end position="86"/>
    </location>
</feature>
<feature type="disulfide bond" evidence="1">
    <location>
        <begin position="64"/>
        <end position="221"/>
    </location>
</feature>
<protein>
    <recommendedName>
        <fullName>Protein FAM3C</fullName>
    </recommendedName>
</protein>
<accession>Q7ZYY4</accession>
<accession>Q6NY75</accession>
<sequence>MMRAGGLLKLGVLVSVLFVAVFLAFELLESNMNFNLGKVFTRYAPPDAVPTRPLRHKCGLSKSCPEDHFAFKITSGAASVVGPKMCFQDNVIMSGVKNNIGRGINIALLNGKTGELTKTDSFDMWTGDVNLLIKFLKDIEDGSIVMMATFDDPATKMNDEARNLIADLGSSSISILGFRDNWVFVGGKGIKTKSPFEQHIKNNAETNKYEGWPEVLEMEGCIPIKHD</sequence>
<gene>
    <name type="primary">fam3c</name>
    <name type="ORF">si:dkey-159a18.2</name>
</gene>
<reference key="1">
    <citation type="journal article" date="2013" name="Nature">
        <title>The zebrafish reference genome sequence and its relationship to the human genome.</title>
        <authorList>
            <person name="Howe K."/>
            <person name="Clark M.D."/>
            <person name="Torroja C.F."/>
            <person name="Torrance J."/>
            <person name="Berthelot C."/>
            <person name="Muffato M."/>
            <person name="Collins J.E."/>
            <person name="Humphray S."/>
            <person name="McLaren K."/>
            <person name="Matthews L."/>
            <person name="McLaren S."/>
            <person name="Sealy I."/>
            <person name="Caccamo M."/>
            <person name="Churcher C."/>
            <person name="Scott C."/>
            <person name="Barrett J.C."/>
            <person name="Koch R."/>
            <person name="Rauch G.J."/>
            <person name="White S."/>
            <person name="Chow W."/>
            <person name="Kilian B."/>
            <person name="Quintais L.T."/>
            <person name="Guerra-Assuncao J.A."/>
            <person name="Zhou Y."/>
            <person name="Gu Y."/>
            <person name="Yen J."/>
            <person name="Vogel J.H."/>
            <person name="Eyre T."/>
            <person name="Redmond S."/>
            <person name="Banerjee R."/>
            <person name="Chi J."/>
            <person name="Fu B."/>
            <person name="Langley E."/>
            <person name="Maguire S.F."/>
            <person name="Laird G.K."/>
            <person name="Lloyd D."/>
            <person name="Kenyon E."/>
            <person name="Donaldson S."/>
            <person name="Sehra H."/>
            <person name="Almeida-King J."/>
            <person name="Loveland J."/>
            <person name="Trevanion S."/>
            <person name="Jones M."/>
            <person name="Quail M."/>
            <person name="Willey D."/>
            <person name="Hunt A."/>
            <person name="Burton J."/>
            <person name="Sims S."/>
            <person name="McLay K."/>
            <person name="Plumb B."/>
            <person name="Davis J."/>
            <person name="Clee C."/>
            <person name="Oliver K."/>
            <person name="Clark R."/>
            <person name="Riddle C."/>
            <person name="Elliot D."/>
            <person name="Threadgold G."/>
            <person name="Harden G."/>
            <person name="Ware D."/>
            <person name="Begum S."/>
            <person name="Mortimore B."/>
            <person name="Kerry G."/>
            <person name="Heath P."/>
            <person name="Phillimore B."/>
            <person name="Tracey A."/>
            <person name="Corby N."/>
            <person name="Dunn M."/>
            <person name="Johnson C."/>
            <person name="Wood J."/>
            <person name="Clark S."/>
            <person name="Pelan S."/>
            <person name="Griffiths G."/>
            <person name="Smith M."/>
            <person name="Glithero R."/>
            <person name="Howden P."/>
            <person name="Barker N."/>
            <person name="Lloyd C."/>
            <person name="Stevens C."/>
            <person name="Harley J."/>
            <person name="Holt K."/>
            <person name="Panagiotidis G."/>
            <person name="Lovell J."/>
            <person name="Beasley H."/>
            <person name="Henderson C."/>
            <person name="Gordon D."/>
            <person name="Auger K."/>
            <person name="Wright D."/>
            <person name="Collins J."/>
            <person name="Raisen C."/>
            <person name="Dyer L."/>
            <person name="Leung K."/>
            <person name="Robertson L."/>
            <person name="Ambridge K."/>
            <person name="Leongamornlert D."/>
            <person name="McGuire S."/>
            <person name="Gilderthorp R."/>
            <person name="Griffiths C."/>
            <person name="Manthravadi D."/>
            <person name="Nichol S."/>
            <person name="Barker G."/>
            <person name="Whitehead S."/>
            <person name="Kay M."/>
            <person name="Brown J."/>
            <person name="Murnane C."/>
            <person name="Gray E."/>
            <person name="Humphries M."/>
            <person name="Sycamore N."/>
            <person name="Barker D."/>
            <person name="Saunders D."/>
            <person name="Wallis J."/>
            <person name="Babbage A."/>
            <person name="Hammond S."/>
            <person name="Mashreghi-Mohammadi M."/>
            <person name="Barr L."/>
            <person name="Martin S."/>
            <person name="Wray P."/>
            <person name="Ellington A."/>
            <person name="Matthews N."/>
            <person name="Ellwood M."/>
            <person name="Woodmansey R."/>
            <person name="Clark G."/>
            <person name="Cooper J."/>
            <person name="Tromans A."/>
            <person name="Grafham D."/>
            <person name="Skuce C."/>
            <person name="Pandian R."/>
            <person name="Andrews R."/>
            <person name="Harrison E."/>
            <person name="Kimberley A."/>
            <person name="Garnett J."/>
            <person name="Fosker N."/>
            <person name="Hall R."/>
            <person name="Garner P."/>
            <person name="Kelly D."/>
            <person name="Bird C."/>
            <person name="Palmer S."/>
            <person name="Gehring I."/>
            <person name="Berger A."/>
            <person name="Dooley C.M."/>
            <person name="Ersan-Urun Z."/>
            <person name="Eser C."/>
            <person name="Geiger H."/>
            <person name="Geisler M."/>
            <person name="Karotki L."/>
            <person name="Kirn A."/>
            <person name="Konantz J."/>
            <person name="Konantz M."/>
            <person name="Oberlander M."/>
            <person name="Rudolph-Geiger S."/>
            <person name="Teucke M."/>
            <person name="Lanz C."/>
            <person name="Raddatz G."/>
            <person name="Osoegawa K."/>
            <person name="Zhu B."/>
            <person name="Rapp A."/>
            <person name="Widaa S."/>
            <person name="Langford C."/>
            <person name="Yang F."/>
            <person name="Schuster S.C."/>
            <person name="Carter N.P."/>
            <person name="Harrow J."/>
            <person name="Ning Z."/>
            <person name="Herrero J."/>
            <person name="Searle S.M."/>
            <person name="Enright A."/>
            <person name="Geisler R."/>
            <person name="Plasterk R.H."/>
            <person name="Lee C."/>
            <person name="Westerfield M."/>
            <person name="de Jong P.J."/>
            <person name="Zon L.I."/>
            <person name="Postlethwait J.H."/>
            <person name="Nusslein-Volhard C."/>
            <person name="Hubbard T.J."/>
            <person name="Roest Crollius H."/>
            <person name="Rogers J."/>
            <person name="Stemple D.L."/>
        </authorList>
    </citation>
    <scope>NUCLEOTIDE SEQUENCE [LARGE SCALE GENOMIC DNA]</scope>
    <source>
        <strain>Tuebingen</strain>
    </source>
</reference>
<reference key="2">
    <citation type="submission" date="2003-01" db="EMBL/GenBank/DDBJ databases">
        <authorList>
            <consortium name="NIH - Zebrafish Gene Collection (ZGC) project"/>
        </authorList>
    </citation>
    <scope>NUCLEOTIDE SEQUENCE [LARGE SCALE MRNA]</scope>
    <source>
        <strain>AB</strain>
        <tissue>Kidney</tissue>
    </source>
</reference>
<proteinExistence type="evidence at transcript level"/>
<keyword id="KW-0217">Developmental protein</keyword>
<keyword id="KW-1015">Disulfide bond</keyword>
<keyword id="KW-0430">Lectin</keyword>
<keyword id="KW-1185">Reference proteome</keyword>
<keyword id="KW-0964">Secreted</keyword>
<keyword id="KW-0732">Signal</keyword>